<protein>
    <recommendedName>
        <fullName evidence="6">Uncharacterized secreted glycosidase ARB_07629</fullName>
        <ecNumber evidence="6">3.2.1.-</ecNumber>
    </recommendedName>
</protein>
<dbReference type="EC" id="3.2.1.-" evidence="6"/>
<dbReference type="EMBL" id="ABSU01000009">
    <property type="protein sequence ID" value="EFE33682.1"/>
    <property type="molecule type" value="Genomic_DNA"/>
</dbReference>
<dbReference type="RefSeq" id="XP_003014322.1">
    <property type="nucleotide sequence ID" value="XM_003014276.1"/>
</dbReference>
<dbReference type="SMR" id="D4ATR3"/>
<dbReference type="GeneID" id="9521742"/>
<dbReference type="KEGG" id="abe:ARB_07629"/>
<dbReference type="eggNOG" id="ENOG502QR5Q">
    <property type="taxonomic scope" value="Eukaryota"/>
</dbReference>
<dbReference type="HOGENOM" id="CLU_003690_4_1_1"/>
<dbReference type="OMA" id="YQDPIAC"/>
<dbReference type="Proteomes" id="UP000008866">
    <property type="component" value="Unassembled WGS sequence"/>
</dbReference>
<dbReference type="GO" id="GO:0005829">
    <property type="term" value="C:cytosol"/>
    <property type="evidence" value="ECO:0007669"/>
    <property type="project" value="TreeGrafter"/>
</dbReference>
<dbReference type="GO" id="GO:0005576">
    <property type="term" value="C:extracellular region"/>
    <property type="evidence" value="ECO:0007669"/>
    <property type="project" value="UniProtKB-SubCell"/>
</dbReference>
<dbReference type="GO" id="GO:0005634">
    <property type="term" value="C:nucleus"/>
    <property type="evidence" value="ECO:0007669"/>
    <property type="project" value="TreeGrafter"/>
</dbReference>
<dbReference type="GO" id="GO:0030246">
    <property type="term" value="F:carbohydrate binding"/>
    <property type="evidence" value="ECO:0007669"/>
    <property type="project" value="InterPro"/>
</dbReference>
<dbReference type="GO" id="GO:0016798">
    <property type="term" value="F:hydrolase activity, acting on glycosyl bonds"/>
    <property type="evidence" value="ECO:0007669"/>
    <property type="project" value="UniProtKB-KW"/>
</dbReference>
<dbReference type="GO" id="GO:0000224">
    <property type="term" value="F:peptide-N4-(N-acetyl-beta-glucosaminyl)asparagine amidase activity"/>
    <property type="evidence" value="ECO:0007669"/>
    <property type="project" value="TreeGrafter"/>
</dbReference>
<dbReference type="GO" id="GO:0005975">
    <property type="term" value="P:carbohydrate metabolic process"/>
    <property type="evidence" value="ECO:0007669"/>
    <property type="project" value="InterPro"/>
</dbReference>
<dbReference type="GO" id="GO:0006516">
    <property type="term" value="P:glycoprotein catabolic process"/>
    <property type="evidence" value="ECO:0007669"/>
    <property type="project" value="TreeGrafter"/>
</dbReference>
<dbReference type="FunFam" id="1.20.1610.10:FF:000002">
    <property type="entry name" value="Alpha-1,2-mannosidase family protein"/>
    <property type="match status" value="1"/>
</dbReference>
<dbReference type="FunFam" id="2.70.98.10:FF:000010">
    <property type="entry name" value="Alpha-1,2-mannosidase family protein"/>
    <property type="match status" value="1"/>
</dbReference>
<dbReference type="FunFam" id="3.30.2080.10:FF:000001">
    <property type="entry name" value="Alpha-1,2-mannosidase subfamily"/>
    <property type="match status" value="1"/>
</dbReference>
<dbReference type="Gene3D" id="2.70.98.10">
    <property type="match status" value="1"/>
</dbReference>
<dbReference type="Gene3D" id="1.20.1050.60">
    <property type="entry name" value="alpha-1,2-mannosidase"/>
    <property type="match status" value="1"/>
</dbReference>
<dbReference type="Gene3D" id="3.30.2080.10">
    <property type="entry name" value="GH92 mannosidase domain"/>
    <property type="match status" value="1"/>
</dbReference>
<dbReference type="InterPro" id="IPR008928">
    <property type="entry name" value="6-hairpin_glycosidase_sf"/>
</dbReference>
<dbReference type="InterPro" id="IPR014718">
    <property type="entry name" value="GH-type_carb-bd"/>
</dbReference>
<dbReference type="InterPro" id="IPR041371">
    <property type="entry name" value="GH92_N"/>
</dbReference>
<dbReference type="InterPro" id="IPR012939">
    <property type="entry name" value="Glyco_hydro_92"/>
</dbReference>
<dbReference type="InterPro" id="IPR050883">
    <property type="entry name" value="PNGase"/>
</dbReference>
<dbReference type="PANTHER" id="PTHR12143">
    <property type="entry name" value="PEPTIDE N-GLYCANASE PNGASE -RELATED"/>
    <property type="match status" value="1"/>
</dbReference>
<dbReference type="PANTHER" id="PTHR12143:SF42">
    <property type="entry name" value="PUTATIVE SUBFAMILY (AFU_ORTHOLOGUE AFUA_6G13760)-RELATED"/>
    <property type="match status" value="1"/>
</dbReference>
<dbReference type="Pfam" id="PF07971">
    <property type="entry name" value="Glyco_hydro_92"/>
    <property type="match status" value="2"/>
</dbReference>
<dbReference type="Pfam" id="PF17678">
    <property type="entry name" value="Glyco_hydro_92N"/>
    <property type="match status" value="1"/>
</dbReference>
<dbReference type="SUPFAM" id="SSF48208">
    <property type="entry name" value="Six-hairpin glycosidases"/>
    <property type="match status" value="1"/>
</dbReference>
<proteinExistence type="evidence at protein level"/>
<reference key="1">
    <citation type="journal article" date="2011" name="Genome Biol.">
        <title>Comparative and functional genomics provide insights into the pathogenicity of dermatophytic fungi.</title>
        <authorList>
            <person name="Burmester A."/>
            <person name="Shelest E."/>
            <person name="Gloeckner G."/>
            <person name="Heddergott C."/>
            <person name="Schindler S."/>
            <person name="Staib P."/>
            <person name="Heidel A."/>
            <person name="Felder M."/>
            <person name="Petzold A."/>
            <person name="Szafranski K."/>
            <person name="Feuermann M."/>
            <person name="Pedruzzi I."/>
            <person name="Priebe S."/>
            <person name="Groth M."/>
            <person name="Winkler R."/>
            <person name="Li W."/>
            <person name="Kniemeyer O."/>
            <person name="Schroeckh V."/>
            <person name="Hertweck C."/>
            <person name="Hube B."/>
            <person name="White T.C."/>
            <person name="Platzer M."/>
            <person name="Guthke R."/>
            <person name="Heitman J."/>
            <person name="Woestemeyer J."/>
            <person name="Zipfel P.F."/>
            <person name="Monod M."/>
            <person name="Brakhage A.A."/>
        </authorList>
    </citation>
    <scope>NUCLEOTIDE SEQUENCE [LARGE SCALE GENOMIC DNA]</scope>
    <scope>IDENTIFICATION BY MASS SPECTROMETRY</scope>
    <scope>SUBCELLULAR LOCATION</scope>
    <source>
        <strain>ATCC MYA-4681 / CBS 112371</strain>
    </source>
</reference>
<reference key="2">
    <citation type="journal article" date="2011" name="Proteomics">
        <title>Identification of novel secreted proteases during extracellular proteolysis by dermatophytes at acidic pH.</title>
        <authorList>
            <person name="Sriranganadane D."/>
            <person name="Waridel P."/>
            <person name="Salamin K."/>
            <person name="Feuermann M."/>
            <person name="Mignon B."/>
            <person name="Staib P."/>
            <person name="Neuhaus J.M."/>
            <person name="Quadroni M."/>
            <person name="Monod M."/>
        </authorList>
    </citation>
    <scope>IDENTIFICATION BY MASS SPECTROMETRY</scope>
    <scope>SUBCELLULAR LOCATION</scope>
</reference>
<keyword id="KW-0325">Glycoprotein</keyword>
<keyword id="KW-0326">Glycosidase</keyword>
<keyword id="KW-0378">Hydrolase</keyword>
<keyword id="KW-1185">Reference proteome</keyword>
<keyword id="KW-0964">Secreted</keyword>
<keyword id="KW-0732">Signal</keyword>
<comment type="subcellular location">
    <subcellularLocation>
        <location evidence="4 5">Secreted</location>
    </subcellularLocation>
</comment>
<comment type="similarity">
    <text evidence="6">Belongs to the glycosyl hydrolase 92 family.</text>
</comment>
<feature type="signal peptide" evidence="1">
    <location>
        <begin position="1"/>
        <end position="24"/>
    </location>
</feature>
<feature type="chain" id="PRO_5003053646" description="Uncharacterized secreted glycosidase ARB_07629">
    <location>
        <begin position="25"/>
        <end position="770"/>
    </location>
</feature>
<feature type="region of interest" description="Disordered" evidence="3">
    <location>
        <begin position="746"/>
        <end position="770"/>
    </location>
</feature>
<feature type="glycosylation site" description="N-linked (GlcNAc...) asparagine" evidence="2">
    <location>
        <position position="78"/>
    </location>
</feature>
<feature type="glycosylation site" description="N-linked (GlcNAc...) asparagine" evidence="2">
    <location>
        <position position="204"/>
    </location>
</feature>
<feature type="glycosylation site" description="N-linked (GlcNAc...) asparagine" evidence="2">
    <location>
        <position position="533"/>
    </location>
</feature>
<feature type="glycosylation site" description="N-linked (GlcNAc...) asparagine" evidence="2">
    <location>
        <position position="638"/>
    </location>
</feature>
<accession>D4ATR3</accession>
<name>A7629_ARTBC</name>
<evidence type="ECO:0000255" key="1"/>
<evidence type="ECO:0000255" key="2">
    <source>
        <dbReference type="PROSITE-ProRule" id="PRU00498"/>
    </source>
</evidence>
<evidence type="ECO:0000256" key="3">
    <source>
        <dbReference type="SAM" id="MobiDB-lite"/>
    </source>
</evidence>
<evidence type="ECO:0000269" key="4">
    <source>
    </source>
</evidence>
<evidence type="ECO:0000269" key="5">
    <source>
    </source>
</evidence>
<evidence type="ECO:0000305" key="6"/>
<gene>
    <name type="ORF">ARB_07629</name>
</gene>
<organism>
    <name type="scientific">Arthroderma benhamiae (strain ATCC MYA-4681 / CBS 112371)</name>
    <name type="common">Trichophyton mentagrophytes</name>
    <dbReference type="NCBI Taxonomy" id="663331"/>
    <lineage>
        <taxon>Eukaryota</taxon>
        <taxon>Fungi</taxon>
        <taxon>Dikarya</taxon>
        <taxon>Ascomycota</taxon>
        <taxon>Pezizomycotina</taxon>
        <taxon>Eurotiomycetes</taxon>
        <taxon>Eurotiomycetidae</taxon>
        <taxon>Onygenales</taxon>
        <taxon>Arthrodermataceae</taxon>
        <taxon>Trichophyton</taxon>
    </lineage>
</organism>
<sequence>MVSAAWLRYPSLLTLGILVSRVAAQYEGDVLRYVDQLVGTANGGHAFPGASLPYGMAKAVADVDGSENYGGFTTEGSNVTGFSHMHDSGTGGKPSMGNFPLVPQICQDDDINKCKFSKEDRAVHYIADSVKARPGYFAIKLNNGIAAEMTVTEHAALYHFDFPHNNAESNGKLPVILVDLTDIQDSRQNAAISLDEDTLRVKANGTFLPSFGIGTYKSFVCVDFSGAEAKDTGIYISNRAGTQPKAISVGRGFNLFYIKAGTYLQFQASSNGPTRVSARVGLSFINEDQACKNAEKEIPGSNWDFEKVRTDAESAWKEKLGLISLKSGGVSDIFQRTFWSAIYRSMISPQDYTGENPLWQSKEPYFDSFYCLLDTYKHQGWLPDCHMSLCKGFTQSGSNADVVIADAYVKSISDNIDWDLAYEAVVKDAEVEPPDWSVEGRGGLMSWKSVGYIPAQDYDYLGTGITTRSISRTVEYSYNDYCVGVLGKGLGKEHEKYFQRSGNWQNLFKADQTSFIDGKDTGFVGFFQPRYYNGTWGYQDPILCSNIAAFCSLTSNSQETYESGIWENQFFVPHDMSTLINLLGGRSKFVARLDYLHDSNILYIGNEPSFLATFLYHYAGRPALSAKRAHTYIPSRFNDTTTGVPGNDDSGAMGSFTVFAMMGLFPNPGQNVYFIMPPFFEAVSIKHPVTGKTATVRNVNFDSKYENVYIQRATLNGKEYTRNWIGHEFFLNGGTLELTLGKEESSWGTGQNDVPPSLGAGIKRDGLRFT</sequence>